<dbReference type="EC" id="2.1.2.9" evidence="1"/>
<dbReference type="EMBL" id="CP000027">
    <property type="protein sequence ID" value="AAW39193.1"/>
    <property type="molecule type" value="Genomic_DNA"/>
</dbReference>
<dbReference type="SMR" id="Q3Z614"/>
<dbReference type="FunCoup" id="Q3Z614">
    <property type="interactions" value="318"/>
</dbReference>
<dbReference type="STRING" id="243164.DET1642"/>
<dbReference type="KEGG" id="det:DET1642"/>
<dbReference type="eggNOG" id="COG0223">
    <property type="taxonomic scope" value="Bacteria"/>
</dbReference>
<dbReference type="HOGENOM" id="CLU_033347_2_0_0"/>
<dbReference type="InParanoid" id="Q3Z614"/>
<dbReference type="Proteomes" id="UP000008289">
    <property type="component" value="Chromosome"/>
</dbReference>
<dbReference type="GO" id="GO:0005829">
    <property type="term" value="C:cytosol"/>
    <property type="evidence" value="ECO:0007669"/>
    <property type="project" value="TreeGrafter"/>
</dbReference>
<dbReference type="GO" id="GO:0004479">
    <property type="term" value="F:methionyl-tRNA formyltransferase activity"/>
    <property type="evidence" value="ECO:0007669"/>
    <property type="project" value="UniProtKB-UniRule"/>
</dbReference>
<dbReference type="CDD" id="cd08646">
    <property type="entry name" value="FMT_core_Met-tRNA-FMT_N"/>
    <property type="match status" value="1"/>
</dbReference>
<dbReference type="CDD" id="cd08704">
    <property type="entry name" value="Met_tRNA_FMT_C"/>
    <property type="match status" value="1"/>
</dbReference>
<dbReference type="Gene3D" id="3.40.50.12230">
    <property type="match status" value="1"/>
</dbReference>
<dbReference type="HAMAP" id="MF_00182">
    <property type="entry name" value="Formyl_trans"/>
    <property type="match status" value="1"/>
</dbReference>
<dbReference type="InterPro" id="IPR005794">
    <property type="entry name" value="Fmt"/>
</dbReference>
<dbReference type="InterPro" id="IPR005793">
    <property type="entry name" value="Formyl_trans_C"/>
</dbReference>
<dbReference type="InterPro" id="IPR002376">
    <property type="entry name" value="Formyl_transf_N"/>
</dbReference>
<dbReference type="InterPro" id="IPR036477">
    <property type="entry name" value="Formyl_transf_N_sf"/>
</dbReference>
<dbReference type="InterPro" id="IPR011034">
    <property type="entry name" value="Formyl_transferase-like_C_sf"/>
</dbReference>
<dbReference type="InterPro" id="IPR044135">
    <property type="entry name" value="Met-tRNA-FMT_C"/>
</dbReference>
<dbReference type="InterPro" id="IPR041711">
    <property type="entry name" value="Met-tRNA-FMT_N"/>
</dbReference>
<dbReference type="NCBIfam" id="TIGR00460">
    <property type="entry name" value="fmt"/>
    <property type="match status" value="1"/>
</dbReference>
<dbReference type="PANTHER" id="PTHR11138">
    <property type="entry name" value="METHIONYL-TRNA FORMYLTRANSFERASE"/>
    <property type="match status" value="1"/>
</dbReference>
<dbReference type="PANTHER" id="PTHR11138:SF5">
    <property type="entry name" value="METHIONYL-TRNA FORMYLTRANSFERASE, MITOCHONDRIAL"/>
    <property type="match status" value="1"/>
</dbReference>
<dbReference type="Pfam" id="PF02911">
    <property type="entry name" value="Formyl_trans_C"/>
    <property type="match status" value="1"/>
</dbReference>
<dbReference type="Pfam" id="PF00551">
    <property type="entry name" value="Formyl_trans_N"/>
    <property type="match status" value="1"/>
</dbReference>
<dbReference type="SUPFAM" id="SSF50486">
    <property type="entry name" value="FMT C-terminal domain-like"/>
    <property type="match status" value="1"/>
</dbReference>
<dbReference type="SUPFAM" id="SSF53328">
    <property type="entry name" value="Formyltransferase"/>
    <property type="match status" value="1"/>
</dbReference>
<keyword id="KW-0648">Protein biosynthesis</keyword>
<keyword id="KW-0808">Transferase</keyword>
<organism>
    <name type="scientific">Dehalococcoides mccartyi (strain ATCC BAA-2266 / KCTC 15142 / 195)</name>
    <name type="common">Dehalococcoides ethenogenes (strain 195)</name>
    <dbReference type="NCBI Taxonomy" id="243164"/>
    <lineage>
        <taxon>Bacteria</taxon>
        <taxon>Bacillati</taxon>
        <taxon>Chloroflexota</taxon>
        <taxon>Dehalococcoidia</taxon>
        <taxon>Dehalococcoidales</taxon>
        <taxon>Dehalococcoidaceae</taxon>
        <taxon>Dehalococcoides</taxon>
    </lineage>
</organism>
<feature type="chain" id="PRO_1000190019" description="Methionyl-tRNA formyltransferase">
    <location>
        <begin position="1"/>
        <end position="312"/>
    </location>
</feature>
<feature type="binding site" evidence="1">
    <location>
        <begin position="112"/>
        <end position="115"/>
    </location>
    <ligand>
        <name>(6S)-5,6,7,8-tetrahydrofolate</name>
        <dbReference type="ChEBI" id="CHEBI:57453"/>
    </ligand>
</feature>
<gene>
    <name evidence="1" type="primary">fmt</name>
    <name type="ordered locus">DET1642</name>
</gene>
<reference key="1">
    <citation type="journal article" date="2005" name="Science">
        <title>Genome sequence of the PCE-dechlorinating bacterium Dehalococcoides ethenogenes.</title>
        <authorList>
            <person name="Seshadri R."/>
            <person name="Adrian L."/>
            <person name="Fouts D.E."/>
            <person name="Eisen J.A."/>
            <person name="Phillippy A.M."/>
            <person name="Methe B.A."/>
            <person name="Ward N.L."/>
            <person name="Nelson W.C."/>
            <person name="DeBoy R.T."/>
            <person name="Khouri H.M."/>
            <person name="Kolonay J.F."/>
            <person name="Dodson R.J."/>
            <person name="Daugherty S.C."/>
            <person name="Brinkac L.M."/>
            <person name="Sullivan S.A."/>
            <person name="Madupu R."/>
            <person name="Nelson K.E."/>
            <person name="Kang K.H."/>
            <person name="Impraim M."/>
            <person name="Tran K."/>
            <person name="Robinson J.M."/>
            <person name="Forberger H.A."/>
            <person name="Fraser C.M."/>
            <person name="Zinder S.H."/>
            <person name="Heidelberg J.F."/>
        </authorList>
    </citation>
    <scope>NUCLEOTIDE SEQUENCE [LARGE SCALE GENOMIC DNA]</scope>
    <source>
        <strain>ATCC BAA-2266 / KCTC 15142 / 195</strain>
    </source>
</reference>
<name>FMT_DEHM1</name>
<proteinExistence type="inferred from homology"/>
<comment type="function">
    <text evidence="1">Attaches a formyl group to the free amino group of methionyl-tRNA(fMet). The formyl group appears to play a dual role in the initiator identity of N-formylmethionyl-tRNA by promoting its recognition by IF2 and preventing the misappropriation of this tRNA by the elongation apparatus.</text>
</comment>
<comment type="catalytic activity">
    <reaction evidence="1">
        <text>L-methionyl-tRNA(fMet) + (6R)-10-formyltetrahydrofolate = N-formyl-L-methionyl-tRNA(fMet) + (6S)-5,6,7,8-tetrahydrofolate + H(+)</text>
        <dbReference type="Rhea" id="RHEA:24380"/>
        <dbReference type="Rhea" id="RHEA-COMP:9952"/>
        <dbReference type="Rhea" id="RHEA-COMP:9953"/>
        <dbReference type="ChEBI" id="CHEBI:15378"/>
        <dbReference type="ChEBI" id="CHEBI:57453"/>
        <dbReference type="ChEBI" id="CHEBI:78530"/>
        <dbReference type="ChEBI" id="CHEBI:78844"/>
        <dbReference type="ChEBI" id="CHEBI:195366"/>
        <dbReference type="EC" id="2.1.2.9"/>
    </reaction>
</comment>
<comment type="similarity">
    <text evidence="1">Belongs to the Fmt family.</text>
</comment>
<protein>
    <recommendedName>
        <fullName evidence="1">Methionyl-tRNA formyltransferase</fullName>
        <ecNumber evidence="1">2.1.2.9</ecNumber>
    </recommendedName>
</protein>
<sequence length="312" mass="33839">MNELRIVFMGSPEFALTPLKMLLAEGYAICGVYTQPDRPAGRGRELCPPPVKALALERGLAVYQPQSLKKPEEQAVLSGLKPDVIVVAAYGLILPQAVLDIPAYGVLNIHPSLLPRYRGATPVAATLLGGDEWAGVSLMKLEAGLDTGPVYSRAAIPVRPEDTTPLLADKLAFIGGCLLLELLSRIPSLPQPELQDNAKATYFGMVTKDMGQVNWQTPAAEIERRVRAFFPWPGVFTSYNQKTLKILEARPQKLGLGLQPSQVRVYEGDRIMVGSASGELEIIRLQLEGKAACSAADFLRGQRHFDGVNLGV</sequence>
<evidence type="ECO:0000255" key="1">
    <source>
        <dbReference type="HAMAP-Rule" id="MF_00182"/>
    </source>
</evidence>
<accession>Q3Z614</accession>